<sequence>MLKPLGDRVVIELVESEEKTASGIVLPDSAKEKPQEGKIVAAGSGRVLESGERVALEVKEGDRIIFSKYAGTEVKYEGTEYLILRESDILAVIG</sequence>
<comment type="function">
    <text evidence="1">Together with the chaperonin GroEL, plays an essential role in assisting protein folding. The GroEL-GroES system forms a nano-cage that allows encapsulation of the non-native substrate proteins and provides a physical environment optimized to promote and accelerate protein folding. GroES binds to the apical surface of the GroEL ring, thereby capping the opening of the GroEL channel.</text>
</comment>
<comment type="subunit">
    <text evidence="1">Heptamer of 7 subunits arranged in a ring. Interacts with the chaperonin GroEL.</text>
</comment>
<comment type="subcellular location">
    <subcellularLocation>
        <location evidence="1">Cytoplasm</location>
    </subcellularLocation>
</comment>
<comment type="induction">
    <text>By heat shock.</text>
</comment>
<comment type="similarity">
    <text evidence="1 2">Belongs to the GroES chaperonin family.</text>
</comment>
<comment type="sequence caution" evidence="2">
    <conflict type="erroneous initiation">
        <sequence resource="EMBL-CDS" id="BAA19726"/>
    </conflict>
</comment>
<gene>
    <name evidence="1" type="primary">groES</name>
    <name evidence="1" type="synonym">groS</name>
    <name type="synonym">mopB</name>
    <name type="ordered locus">BSU06020</name>
</gene>
<organism>
    <name type="scientific">Bacillus subtilis (strain 168)</name>
    <dbReference type="NCBI Taxonomy" id="224308"/>
    <lineage>
        <taxon>Bacteria</taxon>
        <taxon>Bacillati</taxon>
        <taxon>Bacillota</taxon>
        <taxon>Bacilli</taxon>
        <taxon>Bacillales</taxon>
        <taxon>Bacillaceae</taxon>
        <taxon>Bacillus</taxon>
    </lineage>
</organism>
<feature type="chain" id="PRO_0000174698" description="Co-chaperonin GroES">
    <location>
        <begin position="1"/>
        <end position="94"/>
    </location>
</feature>
<accession>P28599</accession>
<accession>O08341</accession>
<reference key="1">
    <citation type="journal article" date="1992" name="J. Bacteriol.">
        <title>Cloning, sequencing, mapping, and transcriptional analysis of the groESL operon from Bacillus subtilis.</title>
        <authorList>
            <person name="Schmidt A."/>
            <person name="Schiesswohl M."/>
            <person name="Voelker U."/>
            <person name="Hecker M."/>
            <person name="Schumann W."/>
        </authorList>
    </citation>
    <scope>NUCLEOTIDE SEQUENCE [GENOMIC DNA]</scope>
</reference>
<reference key="2">
    <citation type="journal article" date="1992" name="J. Bacteriol.">
        <title>Cloning and characterization of the groESL operon from Bacillus subtilis.</title>
        <authorList>
            <person name="Li M."/>
            <person name="Wong S.L."/>
        </authorList>
    </citation>
    <scope>NUCLEOTIDE SEQUENCE [GENOMIC DNA]</scope>
    <source>
        <strain>168</strain>
    </source>
</reference>
<reference key="3">
    <citation type="journal article" date="1992" name="Biosci. Biotechnol. Biochem.">
        <title>Isolation and characterization of the groES and groEL genes of Bacillus subtilis Marburg.</title>
        <authorList>
            <person name="Tozawa Y."/>
            <person name="Yoshikawa H."/>
            <person name="Kawamura F."/>
            <person name="Itaya M."/>
            <person name="Takahashi H."/>
        </authorList>
    </citation>
    <scope>NUCLEOTIDE SEQUENCE [GENOMIC DNA]</scope>
    <source>
        <strain>168 / Marburg / ATCC 6051 / DSM 10 / JCM 1465 / NBRC 13719 / NCIMB 3610 / NRRL NRS-744 / VKM B-501</strain>
    </source>
</reference>
<reference key="4">
    <citation type="journal article" date="1997" name="Microbiology">
        <title>Nucleotide sequence and analysis of the phoB-rrnE-groESL region of the Bacillus subtilis chromosome.</title>
        <authorList>
            <person name="Sadaie Y."/>
            <person name="Yata K."/>
            <person name="Fujita M."/>
            <person name="Sagai H."/>
            <person name="Itaya M."/>
            <person name="Kasahara Y."/>
            <person name="Ogasawara N."/>
        </authorList>
    </citation>
    <scope>NUCLEOTIDE SEQUENCE [GENOMIC DNA]</scope>
    <source>
        <strain>168 / JH642</strain>
    </source>
</reference>
<reference key="5">
    <citation type="journal article" date="1997" name="DNA Res.">
        <title>Sequence analysis of the groESL-cotA region of the Bacillus subtilis genome, containing the restriction/modification system genes.</title>
        <authorList>
            <person name="Kasahara Y."/>
            <person name="Nakai S."/>
            <person name="Ogasawara N."/>
            <person name="Yata K."/>
            <person name="Sadaie Y."/>
        </authorList>
    </citation>
    <scope>NUCLEOTIDE SEQUENCE [GENOMIC DNA] OF 5-94</scope>
    <source>
        <strain>168 / Marburg / ATCC 6051 / DSM 10 / JCM 1465 / NBRC 13719 / NCIMB 3610 / NRRL NRS-744 / VKM B-501</strain>
    </source>
</reference>
<reference key="6">
    <citation type="journal article" date="1997" name="Nature">
        <title>The complete genome sequence of the Gram-positive bacterium Bacillus subtilis.</title>
        <authorList>
            <person name="Kunst F."/>
            <person name="Ogasawara N."/>
            <person name="Moszer I."/>
            <person name="Albertini A.M."/>
            <person name="Alloni G."/>
            <person name="Azevedo V."/>
            <person name="Bertero M.G."/>
            <person name="Bessieres P."/>
            <person name="Bolotin A."/>
            <person name="Borchert S."/>
            <person name="Borriss R."/>
            <person name="Boursier L."/>
            <person name="Brans A."/>
            <person name="Braun M."/>
            <person name="Brignell S.C."/>
            <person name="Bron S."/>
            <person name="Brouillet S."/>
            <person name="Bruschi C.V."/>
            <person name="Caldwell B."/>
            <person name="Capuano V."/>
            <person name="Carter N.M."/>
            <person name="Choi S.-K."/>
            <person name="Codani J.-J."/>
            <person name="Connerton I.F."/>
            <person name="Cummings N.J."/>
            <person name="Daniel R.A."/>
            <person name="Denizot F."/>
            <person name="Devine K.M."/>
            <person name="Duesterhoeft A."/>
            <person name="Ehrlich S.D."/>
            <person name="Emmerson P.T."/>
            <person name="Entian K.-D."/>
            <person name="Errington J."/>
            <person name="Fabret C."/>
            <person name="Ferrari E."/>
            <person name="Foulger D."/>
            <person name="Fritz C."/>
            <person name="Fujita M."/>
            <person name="Fujita Y."/>
            <person name="Fuma S."/>
            <person name="Galizzi A."/>
            <person name="Galleron N."/>
            <person name="Ghim S.-Y."/>
            <person name="Glaser P."/>
            <person name="Goffeau A."/>
            <person name="Golightly E.J."/>
            <person name="Grandi G."/>
            <person name="Guiseppi G."/>
            <person name="Guy B.J."/>
            <person name="Haga K."/>
            <person name="Haiech J."/>
            <person name="Harwood C.R."/>
            <person name="Henaut A."/>
            <person name="Hilbert H."/>
            <person name="Holsappel S."/>
            <person name="Hosono S."/>
            <person name="Hullo M.-F."/>
            <person name="Itaya M."/>
            <person name="Jones L.-M."/>
            <person name="Joris B."/>
            <person name="Karamata D."/>
            <person name="Kasahara Y."/>
            <person name="Klaerr-Blanchard M."/>
            <person name="Klein C."/>
            <person name="Kobayashi Y."/>
            <person name="Koetter P."/>
            <person name="Koningstein G."/>
            <person name="Krogh S."/>
            <person name="Kumano M."/>
            <person name="Kurita K."/>
            <person name="Lapidus A."/>
            <person name="Lardinois S."/>
            <person name="Lauber J."/>
            <person name="Lazarevic V."/>
            <person name="Lee S.-M."/>
            <person name="Levine A."/>
            <person name="Liu H."/>
            <person name="Masuda S."/>
            <person name="Mauel C."/>
            <person name="Medigue C."/>
            <person name="Medina N."/>
            <person name="Mellado R.P."/>
            <person name="Mizuno M."/>
            <person name="Moestl D."/>
            <person name="Nakai S."/>
            <person name="Noback M."/>
            <person name="Noone D."/>
            <person name="O'Reilly M."/>
            <person name="Ogawa K."/>
            <person name="Ogiwara A."/>
            <person name="Oudega B."/>
            <person name="Park S.-H."/>
            <person name="Parro V."/>
            <person name="Pohl T.M."/>
            <person name="Portetelle D."/>
            <person name="Porwollik S."/>
            <person name="Prescott A.M."/>
            <person name="Presecan E."/>
            <person name="Pujic P."/>
            <person name="Purnelle B."/>
            <person name="Rapoport G."/>
            <person name="Rey M."/>
            <person name="Reynolds S."/>
            <person name="Rieger M."/>
            <person name="Rivolta C."/>
            <person name="Rocha E."/>
            <person name="Roche B."/>
            <person name="Rose M."/>
            <person name="Sadaie Y."/>
            <person name="Sato T."/>
            <person name="Scanlan E."/>
            <person name="Schleich S."/>
            <person name="Schroeter R."/>
            <person name="Scoffone F."/>
            <person name="Sekiguchi J."/>
            <person name="Sekowska A."/>
            <person name="Seror S.J."/>
            <person name="Serror P."/>
            <person name="Shin B.-S."/>
            <person name="Soldo B."/>
            <person name="Sorokin A."/>
            <person name="Tacconi E."/>
            <person name="Takagi T."/>
            <person name="Takahashi H."/>
            <person name="Takemaru K."/>
            <person name="Takeuchi M."/>
            <person name="Tamakoshi A."/>
            <person name="Tanaka T."/>
            <person name="Terpstra P."/>
            <person name="Tognoni A."/>
            <person name="Tosato V."/>
            <person name="Uchiyama S."/>
            <person name="Vandenbol M."/>
            <person name="Vannier F."/>
            <person name="Vassarotti A."/>
            <person name="Viari A."/>
            <person name="Wambutt R."/>
            <person name="Wedler E."/>
            <person name="Wedler H."/>
            <person name="Weitzenegger T."/>
            <person name="Winters P."/>
            <person name="Wipat A."/>
            <person name="Yamamoto H."/>
            <person name="Yamane K."/>
            <person name="Yasumoto K."/>
            <person name="Yata K."/>
            <person name="Yoshida K."/>
            <person name="Yoshikawa H.-F."/>
            <person name="Zumstein E."/>
            <person name="Yoshikawa H."/>
            <person name="Danchin A."/>
        </authorList>
    </citation>
    <scope>NUCLEOTIDE SEQUENCE [LARGE SCALE GENOMIC DNA]</scope>
    <source>
        <strain>168</strain>
    </source>
</reference>
<reference key="7">
    <citation type="journal article" date="1996" name="J. Bacteriol.">
        <title>Cold shock stress-induced proteins in Bacillus subtilis.</title>
        <authorList>
            <person name="Graumann P."/>
            <person name="Schroeder K."/>
            <person name="Schmid R."/>
            <person name="Marahiel M.A."/>
        </authorList>
    </citation>
    <scope>PROTEIN SEQUENCE OF 1-20</scope>
    <source>
        <strain>168 / JH642</strain>
    </source>
</reference>
<name>CH10_BACSU</name>
<dbReference type="EMBL" id="M84965">
    <property type="protein sequence ID" value="AAA22530.1"/>
    <property type="molecule type" value="Genomic_DNA"/>
</dbReference>
<dbReference type="EMBL" id="M81132">
    <property type="protein sequence ID" value="AAA22502.1"/>
    <property type="molecule type" value="Genomic_DNA"/>
</dbReference>
<dbReference type="EMBL" id="D10972">
    <property type="protein sequence ID" value="BAA22518.1"/>
    <property type="molecule type" value="Genomic_DNA"/>
</dbReference>
<dbReference type="EMBL" id="D88802">
    <property type="protein sequence ID" value="BAA19726.1"/>
    <property type="status" value="ALT_INIT"/>
    <property type="molecule type" value="Genomic_DNA"/>
</dbReference>
<dbReference type="EMBL" id="AB007637">
    <property type="protein sequence ID" value="BAA22746.1"/>
    <property type="molecule type" value="Genomic_DNA"/>
</dbReference>
<dbReference type="EMBL" id="AL009126">
    <property type="protein sequence ID" value="CAB12421.2"/>
    <property type="molecule type" value="Genomic_DNA"/>
</dbReference>
<dbReference type="PIR" id="A41884">
    <property type="entry name" value="A41884"/>
</dbReference>
<dbReference type="RefSeq" id="NP_388483.2">
    <property type="nucleotide sequence ID" value="NC_000964.3"/>
</dbReference>
<dbReference type="RefSeq" id="WP_003155970.1">
    <property type="nucleotide sequence ID" value="NZ_OZ025638.1"/>
</dbReference>
<dbReference type="SMR" id="P28599"/>
<dbReference type="FunCoup" id="P28599">
    <property type="interactions" value="559"/>
</dbReference>
<dbReference type="STRING" id="224308.BSU06020"/>
<dbReference type="jPOST" id="P28599"/>
<dbReference type="PaxDb" id="224308-BSU06020"/>
<dbReference type="EnsemblBacteria" id="CAB12421">
    <property type="protein sequence ID" value="CAB12421"/>
    <property type="gene ID" value="BSU_06020"/>
</dbReference>
<dbReference type="GeneID" id="93079782"/>
<dbReference type="GeneID" id="938006"/>
<dbReference type="KEGG" id="bsu:BSU06020"/>
<dbReference type="PATRIC" id="fig|224308.179.peg.647"/>
<dbReference type="eggNOG" id="COG0234">
    <property type="taxonomic scope" value="Bacteria"/>
</dbReference>
<dbReference type="InParanoid" id="P28599"/>
<dbReference type="OrthoDB" id="9806791at2"/>
<dbReference type="PhylomeDB" id="P28599"/>
<dbReference type="BioCyc" id="BSUB:BSU06020-MONOMER"/>
<dbReference type="PRO" id="PR:P28599"/>
<dbReference type="Proteomes" id="UP000001570">
    <property type="component" value="Chromosome"/>
</dbReference>
<dbReference type="GO" id="GO:0005737">
    <property type="term" value="C:cytoplasm"/>
    <property type="evidence" value="ECO:0007669"/>
    <property type="project" value="UniProtKB-SubCell"/>
</dbReference>
<dbReference type="GO" id="GO:0005524">
    <property type="term" value="F:ATP binding"/>
    <property type="evidence" value="ECO:0007669"/>
    <property type="project" value="InterPro"/>
</dbReference>
<dbReference type="GO" id="GO:0046872">
    <property type="term" value="F:metal ion binding"/>
    <property type="evidence" value="ECO:0000318"/>
    <property type="project" value="GO_Central"/>
</dbReference>
<dbReference type="GO" id="GO:0044183">
    <property type="term" value="F:protein folding chaperone"/>
    <property type="evidence" value="ECO:0007669"/>
    <property type="project" value="InterPro"/>
</dbReference>
<dbReference type="GO" id="GO:0051087">
    <property type="term" value="F:protein-folding chaperone binding"/>
    <property type="evidence" value="ECO:0000318"/>
    <property type="project" value="GO_Central"/>
</dbReference>
<dbReference type="GO" id="GO:0051082">
    <property type="term" value="F:unfolded protein binding"/>
    <property type="evidence" value="ECO:0000318"/>
    <property type="project" value="GO_Central"/>
</dbReference>
<dbReference type="GO" id="GO:0051085">
    <property type="term" value="P:chaperone cofactor-dependent protein refolding"/>
    <property type="evidence" value="ECO:0000318"/>
    <property type="project" value="GO_Central"/>
</dbReference>
<dbReference type="CDD" id="cd00320">
    <property type="entry name" value="cpn10"/>
    <property type="match status" value="1"/>
</dbReference>
<dbReference type="FunFam" id="2.30.33.40:FF:000001">
    <property type="entry name" value="10 kDa chaperonin"/>
    <property type="match status" value="1"/>
</dbReference>
<dbReference type="Gene3D" id="2.30.33.40">
    <property type="entry name" value="GroES chaperonin"/>
    <property type="match status" value="1"/>
</dbReference>
<dbReference type="HAMAP" id="MF_00580">
    <property type="entry name" value="CH10"/>
    <property type="match status" value="1"/>
</dbReference>
<dbReference type="InterPro" id="IPR020818">
    <property type="entry name" value="Chaperonin_GroES"/>
</dbReference>
<dbReference type="InterPro" id="IPR037124">
    <property type="entry name" value="Chaperonin_GroES_sf"/>
</dbReference>
<dbReference type="InterPro" id="IPR018369">
    <property type="entry name" value="Chaprnonin_Cpn10_CS"/>
</dbReference>
<dbReference type="InterPro" id="IPR011032">
    <property type="entry name" value="GroES-like_sf"/>
</dbReference>
<dbReference type="NCBIfam" id="NF001527">
    <property type="entry name" value="PRK00364.1-2"/>
    <property type="match status" value="1"/>
</dbReference>
<dbReference type="NCBIfam" id="NF001530">
    <property type="entry name" value="PRK00364.1-6"/>
    <property type="match status" value="1"/>
</dbReference>
<dbReference type="NCBIfam" id="NF001531">
    <property type="entry name" value="PRK00364.2-2"/>
    <property type="match status" value="1"/>
</dbReference>
<dbReference type="NCBIfam" id="NF001532">
    <property type="entry name" value="PRK00364.2-3"/>
    <property type="match status" value="1"/>
</dbReference>
<dbReference type="NCBIfam" id="NF001533">
    <property type="entry name" value="PRK00364.2-4"/>
    <property type="match status" value="1"/>
</dbReference>
<dbReference type="NCBIfam" id="NF001534">
    <property type="entry name" value="PRK00364.2-5"/>
    <property type="match status" value="1"/>
</dbReference>
<dbReference type="PANTHER" id="PTHR10772">
    <property type="entry name" value="10 KDA HEAT SHOCK PROTEIN"/>
    <property type="match status" value="1"/>
</dbReference>
<dbReference type="PANTHER" id="PTHR10772:SF58">
    <property type="entry name" value="CO-CHAPERONIN GROES"/>
    <property type="match status" value="1"/>
</dbReference>
<dbReference type="Pfam" id="PF00166">
    <property type="entry name" value="Cpn10"/>
    <property type="match status" value="1"/>
</dbReference>
<dbReference type="PRINTS" id="PR00297">
    <property type="entry name" value="CHAPERONIN10"/>
</dbReference>
<dbReference type="SMART" id="SM00883">
    <property type="entry name" value="Cpn10"/>
    <property type="match status" value="1"/>
</dbReference>
<dbReference type="SUPFAM" id="SSF50129">
    <property type="entry name" value="GroES-like"/>
    <property type="match status" value="1"/>
</dbReference>
<dbReference type="PROSITE" id="PS00681">
    <property type="entry name" value="CHAPERONINS_CPN10"/>
    <property type="match status" value="1"/>
</dbReference>
<evidence type="ECO:0000255" key="1">
    <source>
        <dbReference type="HAMAP-Rule" id="MF_00580"/>
    </source>
</evidence>
<evidence type="ECO:0000305" key="2"/>
<keyword id="KW-0143">Chaperone</keyword>
<keyword id="KW-0963">Cytoplasm</keyword>
<keyword id="KW-0903">Direct protein sequencing</keyword>
<keyword id="KW-1185">Reference proteome</keyword>
<keyword id="KW-0346">Stress response</keyword>
<proteinExistence type="evidence at protein level"/>
<protein>
    <recommendedName>
        <fullName evidence="1">Co-chaperonin GroES</fullName>
    </recommendedName>
    <alternativeName>
        <fullName evidence="1">10 kDa chaperonin</fullName>
    </alternativeName>
    <alternativeName>
        <fullName evidence="1">Chaperonin-10</fullName>
        <shortName evidence="1">Cpn10</shortName>
    </alternativeName>
</protein>